<dbReference type="EC" id="3.6.5.n1" evidence="1"/>
<dbReference type="EMBL" id="CP001252">
    <property type="protein sequence ID" value="ACK47599.1"/>
    <property type="molecule type" value="Genomic_DNA"/>
</dbReference>
<dbReference type="RefSeq" id="WP_006085065.1">
    <property type="nucleotide sequence ID" value="NC_011663.1"/>
</dbReference>
<dbReference type="SMR" id="B8EBQ4"/>
<dbReference type="GeneID" id="11771544"/>
<dbReference type="KEGG" id="sbp:Sbal223_3114"/>
<dbReference type="HOGENOM" id="CLU_009995_3_3_6"/>
<dbReference type="Proteomes" id="UP000002507">
    <property type="component" value="Chromosome"/>
</dbReference>
<dbReference type="GO" id="GO:0005886">
    <property type="term" value="C:plasma membrane"/>
    <property type="evidence" value="ECO:0007669"/>
    <property type="project" value="UniProtKB-SubCell"/>
</dbReference>
<dbReference type="GO" id="GO:0005525">
    <property type="term" value="F:GTP binding"/>
    <property type="evidence" value="ECO:0007669"/>
    <property type="project" value="UniProtKB-UniRule"/>
</dbReference>
<dbReference type="GO" id="GO:0003924">
    <property type="term" value="F:GTPase activity"/>
    <property type="evidence" value="ECO:0007669"/>
    <property type="project" value="UniProtKB-UniRule"/>
</dbReference>
<dbReference type="GO" id="GO:0097216">
    <property type="term" value="F:guanosine tetraphosphate binding"/>
    <property type="evidence" value="ECO:0007669"/>
    <property type="project" value="UniProtKB-ARBA"/>
</dbReference>
<dbReference type="GO" id="GO:0043022">
    <property type="term" value="F:ribosome binding"/>
    <property type="evidence" value="ECO:0007669"/>
    <property type="project" value="UniProtKB-UniRule"/>
</dbReference>
<dbReference type="GO" id="GO:0003746">
    <property type="term" value="F:translation elongation factor activity"/>
    <property type="evidence" value="ECO:0007669"/>
    <property type="project" value="UniProtKB-UniRule"/>
</dbReference>
<dbReference type="GO" id="GO:0045727">
    <property type="term" value="P:positive regulation of translation"/>
    <property type="evidence" value="ECO:0007669"/>
    <property type="project" value="UniProtKB-UniRule"/>
</dbReference>
<dbReference type="CDD" id="cd03699">
    <property type="entry name" value="EF4_II"/>
    <property type="match status" value="1"/>
</dbReference>
<dbReference type="CDD" id="cd16260">
    <property type="entry name" value="EF4_III"/>
    <property type="match status" value="1"/>
</dbReference>
<dbReference type="CDD" id="cd01890">
    <property type="entry name" value="LepA"/>
    <property type="match status" value="1"/>
</dbReference>
<dbReference type="CDD" id="cd03709">
    <property type="entry name" value="lepA_C"/>
    <property type="match status" value="1"/>
</dbReference>
<dbReference type="FunFam" id="3.40.50.300:FF:000078">
    <property type="entry name" value="Elongation factor 4"/>
    <property type="match status" value="1"/>
</dbReference>
<dbReference type="FunFam" id="2.40.30.10:FF:000015">
    <property type="entry name" value="Translation factor GUF1, mitochondrial"/>
    <property type="match status" value="1"/>
</dbReference>
<dbReference type="FunFam" id="3.30.70.240:FF:000007">
    <property type="entry name" value="Translation factor GUF1, mitochondrial"/>
    <property type="match status" value="1"/>
</dbReference>
<dbReference type="FunFam" id="3.30.70.2570:FF:000001">
    <property type="entry name" value="Translation factor GUF1, mitochondrial"/>
    <property type="match status" value="1"/>
</dbReference>
<dbReference type="FunFam" id="3.30.70.870:FF:000004">
    <property type="entry name" value="Translation factor GUF1, mitochondrial"/>
    <property type="match status" value="1"/>
</dbReference>
<dbReference type="Gene3D" id="3.30.70.240">
    <property type="match status" value="1"/>
</dbReference>
<dbReference type="Gene3D" id="3.30.70.2570">
    <property type="entry name" value="Elongation factor 4, C-terminal domain"/>
    <property type="match status" value="1"/>
</dbReference>
<dbReference type="Gene3D" id="3.30.70.870">
    <property type="entry name" value="Elongation Factor G (Translational Gtpase), domain 3"/>
    <property type="match status" value="1"/>
</dbReference>
<dbReference type="Gene3D" id="3.40.50.300">
    <property type="entry name" value="P-loop containing nucleotide triphosphate hydrolases"/>
    <property type="match status" value="1"/>
</dbReference>
<dbReference type="Gene3D" id="2.40.30.10">
    <property type="entry name" value="Translation factors"/>
    <property type="match status" value="1"/>
</dbReference>
<dbReference type="HAMAP" id="MF_00071">
    <property type="entry name" value="LepA"/>
    <property type="match status" value="1"/>
</dbReference>
<dbReference type="InterPro" id="IPR006297">
    <property type="entry name" value="EF-4"/>
</dbReference>
<dbReference type="InterPro" id="IPR035647">
    <property type="entry name" value="EFG_III/V"/>
</dbReference>
<dbReference type="InterPro" id="IPR000640">
    <property type="entry name" value="EFG_V-like"/>
</dbReference>
<dbReference type="InterPro" id="IPR004161">
    <property type="entry name" value="EFTu-like_2"/>
</dbReference>
<dbReference type="InterPro" id="IPR031157">
    <property type="entry name" value="G_TR_CS"/>
</dbReference>
<dbReference type="InterPro" id="IPR038363">
    <property type="entry name" value="LepA_C_sf"/>
</dbReference>
<dbReference type="InterPro" id="IPR013842">
    <property type="entry name" value="LepA_CTD"/>
</dbReference>
<dbReference type="InterPro" id="IPR035654">
    <property type="entry name" value="LepA_IV"/>
</dbReference>
<dbReference type="InterPro" id="IPR027417">
    <property type="entry name" value="P-loop_NTPase"/>
</dbReference>
<dbReference type="InterPro" id="IPR005225">
    <property type="entry name" value="Small_GTP-bd"/>
</dbReference>
<dbReference type="InterPro" id="IPR000795">
    <property type="entry name" value="T_Tr_GTP-bd_dom"/>
</dbReference>
<dbReference type="InterPro" id="IPR009000">
    <property type="entry name" value="Transl_B-barrel_sf"/>
</dbReference>
<dbReference type="NCBIfam" id="TIGR01393">
    <property type="entry name" value="lepA"/>
    <property type="match status" value="1"/>
</dbReference>
<dbReference type="NCBIfam" id="TIGR00231">
    <property type="entry name" value="small_GTP"/>
    <property type="match status" value="1"/>
</dbReference>
<dbReference type="PANTHER" id="PTHR43512:SF4">
    <property type="entry name" value="TRANSLATION FACTOR GUF1 HOMOLOG, CHLOROPLASTIC"/>
    <property type="match status" value="1"/>
</dbReference>
<dbReference type="PANTHER" id="PTHR43512">
    <property type="entry name" value="TRANSLATION FACTOR GUF1-RELATED"/>
    <property type="match status" value="1"/>
</dbReference>
<dbReference type="Pfam" id="PF00679">
    <property type="entry name" value="EFG_C"/>
    <property type="match status" value="1"/>
</dbReference>
<dbReference type="Pfam" id="PF00009">
    <property type="entry name" value="GTP_EFTU"/>
    <property type="match status" value="1"/>
</dbReference>
<dbReference type="Pfam" id="PF03144">
    <property type="entry name" value="GTP_EFTU_D2"/>
    <property type="match status" value="1"/>
</dbReference>
<dbReference type="Pfam" id="PF06421">
    <property type="entry name" value="LepA_C"/>
    <property type="match status" value="1"/>
</dbReference>
<dbReference type="PRINTS" id="PR00315">
    <property type="entry name" value="ELONGATNFCT"/>
</dbReference>
<dbReference type="SMART" id="SM00838">
    <property type="entry name" value="EFG_C"/>
    <property type="match status" value="1"/>
</dbReference>
<dbReference type="SUPFAM" id="SSF54980">
    <property type="entry name" value="EF-G C-terminal domain-like"/>
    <property type="match status" value="2"/>
</dbReference>
<dbReference type="SUPFAM" id="SSF52540">
    <property type="entry name" value="P-loop containing nucleoside triphosphate hydrolases"/>
    <property type="match status" value="1"/>
</dbReference>
<dbReference type="SUPFAM" id="SSF50447">
    <property type="entry name" value="Translation proteins"/>
    <property type="match status" value="1"/>
</dbReference>
<dbReference type="PROSITE" id="PS00301">
    <property type="entry name" value="G_TR_1"/>
    <property type="match status" value="1"/>
</dbReference>
<dbReference type="PROSITE" id="PS51722">
    <property type="entry name" value="G_TR_2"/>
    <property type="match status" value="1"/>
</dbReference>
<comment type="function">
    <text evidence="1">Required for accurate and efficient protein synthesis under certain stress conditions. May act as a fidelity factor of the translation reaction, by catalyzing a one-codon backward translocation of tRNAs on improperly translocated ribosomes. Back-translocation proceeds from a post-translocation (POST) complex to a pre-translocation (PRE) complex, thus giving elongation factor G a second chance to translocate the tRNAs correctly. Binds to ribosomes in a GTP-dependent manner.</text>
</comment>
<comment type="catalytic activity">
    <reaction evidence="1">
        <text>GTP + H2O = GDP + phosphate + H(+)</text>
        <dbReference type="Rhea" id="RHEA:19669"/>
        <dbReference type="ChEBI" id="CHEBI:15377"/>
        <dbReference type="ChEBI" id="CHEBI:15378"/>
        <dbReference type="ChEBI" id="CHEBI:37565"/>
        <dbReference type="ChEBI" id="CHEBI:43474"/>
        <dbReference type="ChEBI" id="CHEBI:58189"/>
        <dbReference type="EC" id="3.6.5.n1"/>
    </reaction>
</comment>
<comment type="subcellular location">
    <subcellularLocation>
        <location evidence="1">Cell inner membrane</location>
        <topology evidence="1">Peripheral membrane protein</topology>
        <orientation evidence="1">Cytoplasmic side</orientation>
    </subcellularLocation>
</comment>
<comment type="similarity">
    <text evidence="1">Belongs to the TRAFAC class translation factor GTPase superfamily. Classic translation factor GTPase family. LepA subfamily.</text>
</comment>
<keyword id="KW-0997">Cell inner membrane</keyword>
<keyword id="KW-1003">Cell membrane</keyword>
<keyword id="KW-0342">GTP-binding</keyword>
<keyword id="KW-0378">Hydrolase</keyword>
<keyword id="KW-0472">Membrane</keyword>
<keyword id="KW-0547">Nucleotide-binding</keyword>
<keyword id="KW-0648">Protein biosynthesis</keyword>
<organism>
    <name type="scientific">Shewanella baltica (strain OS223)</name>
    <dbReference type="NCBI Taxonomy" id="407976"/>
    <lineage>
        <taxon>Bacteria</taxon>
        <taxon>Pseudomonadati</taxon>
        <taxon>Pseudomonadota</taxon>
        <taxon>Gammaproteobacteria</taxon>
        <taxon>Alteromonadales</taxon>
        <taxon>Shewanellaceae</taxon>
        <taxon>Shewanella</taxon>
    </lineage>
</organism>
<sequence>MKQIRNFSIIAHIDHGKSTLSDRLIQVCGGLTDREMDAQVLDSMDLERERGITIKAQSVTLDYKAKDGLVYQLNFIDTPGHVDFSYEVSRSLAACEGALLVVDAGQGVEAQTLANCYTALDMNLDVVPILNKIDLPQADPERVAAEIEDIVGIDAIDAVRCSAKTGVGVDEVLEVIVAKIPPPEGDPNAPLQALIIDSWFDNYLGVVSLVRIKHGSLKKGDKFKVMSTGQNHTADRVGIFTPKQTDKTELKTGEVGFVIAGLKEIHGAPVGDTLTLAKNGAEKPLPGFKKVKPQVYAGVFPISTDEYENFRDALNKLSLNDASLFFEPESSSALGFGFRIGYLGLLHMEIVQERLEREYNLELITTAPTVVYEVVMTSGETIYVDNPSDLPAINNIEEMREPIVEANILVPKEYLGNVITLCIEKRGTQVNMVYHGNQVAVTYHLPMAEVVMDFFDRLKSTSRGYASLEYNFIRFDPADMVRLDILINGDRVDALAMVIHRSNIRHRGLALVDKMKELIPRQMFDIAIQAAVGSQIIARSTVKALRKDVTAKCYGGDVSRKKKLLNKQKEGKKRMKQVGNVEVPQEAFLAVLKLNE</sequence>
<protein>
    <recommendedName>
        <fullName evidence="1">Elongation factor 4</fullName>
        <shortName evidence="1">EF-4</shortName>
        <ecNumber evidence="1">3.6.5.n1</ecNumber>
    </recommendedName>
    <alternativeName>
        <fullName evidence="1">Ribosomal back-translocase LepA</fullName>
    </alternativeName>
</protein>
<proteinExistence type="inferred from homology"/>
<evidence type="ECO:0000255" key="1">
    <source>
        <dbReference type="HAMAP-Rule" id="MF_00071"/>
    </source>
</evidence>
<gene>
    <name evidence="1" type="primary">lepA</name>
    <name type="ordered locus">Sbal223_3114</name>
</gene>
<accession>B8EBQ4</accession>
<reference key="1">
    <citation type="submission" date="2008-12" db="EMBL/GenBank/DDBJ databases">
        <title>Complete sequence of chromosome of Shewanella baltica OS223.</title>
        <authorList>
            <consortium name="US DOE Joint Genome Institute"/>
            <person name="Lucas S."/>
            <person name="Copeland A."/>
            <person name="Lapidus A."/>
            <person name="Glavina del Rio T."/>
            <person name="Dalin E."/>
            <person name="Tice H."/>
            <person name="Bruce D."/>
            <person name="Goodwin L."/>
            <person name="Pitluck S."/>
            <person name="Chertkov O."/>
            <person name="Meincke L."/>
            <person name="Brettin T."/>
            <person name="Detter J.C."/>
            <person name="Han C."/>
            <person name="Kuske C.R."/>
            <person name="Larimer F."/>
            <person name="Land M."/>
            <person name="Hauser L."/>
            <person name="Kyrpides N."/>
            <person name="Ovchinnikova G."/>
            <person name="Brettar I."/>
            <person name="Rodrigues J."/>
            <person name="Konstantinidis K."/>
            <person name="Tiedje J."/>
        </authorList>
    </citation>
    <scope>NUCLEOTIDE SEQUENCE [LARGE SCALE GENOMIC DNA]</scope>
    <source>
        <strain>OS223</strain>
    </source>
</reference>
<name>LEPA_SHEB2</name>
<feature type="chain" id="PRO_1000190827" description="Elongation factor 4">
    <location>
        <begin position="1"/>
        <end position="596"/>
    </location>
</feature>
<feature type="domain" description="tr-type G">
    <location>
        <begin position="2"/>
        <end position="184"/>
    </location>
</feature>
<feature type="binding site" evidence="1">
    <location>
        <begin position="14"/>
        <end position="19"/>
    </location>
    <ligand>
        <name>GTP</name>
        <dbReference type="ChEBI" id="CHEBI:37565"/>
    </ligand>
</feature>
<feature type="binding site" evidence="1">
    <location>
        <begin position="131"/>
        <end position="134"/>
    </location>
    <ligand>
        <name>GTP</name>
        <dbReference type="ChEBI" id="CHEBI:37565"/>
    </ligand>
</feature>